<reference key="1">
    <citation type="journal article" date="2008" name="Mol. Biol. Evol.">
        <title>Genome evolution of Wolbachia strain wPip from the Culex pipiens group.</title>
        <authorList>
            <person name="Klasson L."/>
            <person name="Walker T."/>
            <person name="Sebaihia M."/>
            <person name="Sanders M.J."/>
            <person name="Quail M.A."/>
            <person name="Lord A."/>
            <person name="Sanders S."/>
            <person name="Earl J."/>
            <person name="O'Neill S.L."/>
            <person name="Thomson N."/>
            <person name="Sinkins S.P."/>
            <person name="Parkhill J."/>
        </authorList>
    </citation>
    <scope>NUCLEOTIDE SEQUENCE [LARGE SCALE GENOMIC DNA]</scope>
    <source>
        <strain>wPip</strain>
    </source>
</reference>
<keyword id="KW-0686">Riboflavin biosynthesis</keyword>
<keyword id="KW-0808">Transferase</keyword>
<proteinExistence type="inferred from homology"/>
<evidence type="ECO:0000255" key="1">
    <source>
        <dbReference type="HAMAP-Rule" id="MF_00178"/>
    </source>
</evidence>
<accession>B3CL66</accession>
<organism>
    <name type="scientific">Wolbachia pipientis subsp. Culex pipiens (strain wPip)</name>
    <dbReference type="NCBI Taxonomy" id="570417"/>
    <lineage>
        <taxon>Bacteria</taxon>
        <taxon>Pseudomonadati</taxon>
        <taxon>Pseudomonadota</taxon>
        <taxon>Alphaproteobacteria</taxon>
        <taxon>Rickettsiales</taxon>
        <taxon>Anaplasmataceae</taxon>
        <taxon>Wolbachieae</taxon>
        <taxon>Wolbachia</taxon>
    </lineage>
</organism>
<dbReference type="EC" id="2.5.1.78" evidence="1"/>
<dbReference type="EMBL" id="AM999887">
    <property type="protein sequence ID" value="CAQ54114.1"/>
    <property type="molecule type" value="Genomic_DNA"/>
</dbReference>
<dbReference type="RefSeq" id="WP_007302797.1">
    <property type="nucleotide sequence ID" value="NC_010981.1"/>
</dbReference>
<dbReference type="SMR" id="B3CL66"/>
<dbReference type="KEGG" id="wpi:WP0005"/>
<dbReference type="eggNOG" id="COG0054">
    <property type="taxonomic scope" value="Bacteria"/>
</dbReference>
<dbReference type="HOGENOM" id="CLU_089358_1_2_5"/>
<dbReference type="UniPathway" id="UPA00275">
    <property type="reaction ID" value="UER00404"/>
</dbReference>
<dbReference type="Proteomes" id="UP000008814">
    <property type="component" value="Chromosome"/>
</dbReference>
<dbReference type="GO" id="GO:0005829">
    <property type="term" value="C:cytosol"/>
    <property type="evidence" value="ECO:0007669"/>
    <property type="project" value="TreeGrafter"/>
</dbReference>
<dbReference type="GO" id="GO:0009349">
    <property type="term" value="C:riboflavin synthase complex"/>
    <property type="evidence" value="ECO:0007669"/>
    <property type="project" value="InterPro"/>
</dbReference>
<dbReference type="GO" id="GO:0000906">
    <property type="term" value="F:6,7-dimethyl-8-ribityllumazine synthase activity"/>
    <property type="evidence" value="ECO:0007669"/>
    <property type="project" value="UniProtKB-UniRule"/>
</dbReference>
<dbReference type="GO" id="GO:0009231">
    <property type="term" value="P:riboflavin biosynthetic process"/>
    <property type="evidence" value="ECO:0007669"/>
    <property type="project" value="UniProtKB-UniRule"/>
</dbReference>
<dbReference type="CDD" id="cd09209">
    <property type="entry name" value="Lumazine_synthase-I"/>
    <property type="match status" value="1"/>
</dbReference>
<dbReference type="Gene3D" id="3.40.50.960">
    <property type="entry name" value="Lumazine/riboflavin synthase"/>
    <property type="match status" value="1"/>
</dbReference>
<dbReference type="HAMAP" id="MF_00178">
    <property type="entry name" value="Lumazine_synth"/>
    <property type="match status" value="1"/>
</dbReference>
<dbReference type="InterPro" id="IPR034964">
    <property type="entry name" value="LS"/>
</dbReference>
<dbReference type="InterPro" id="IPR002180">
    <property type="entry name" value="LS/RS"/>
</dbReference>
<dbReference type="InterPro" id="IPR036467">
    <property type="entry name" value="LS/RS_sf"/>
</dbReference>
<dbReference type="NCBIfam" id="TIGR00114">
    <property type="entry name" value="lumazine-synth"/>
    <property type="match status" value="1"/>
</dbReference>
<dbReference type="NCBIfam" id="NF000814">
    <property type="entry name" value="PRK00061.2-2"/>
    <property type="match status" value="1"/>
</dbReference>
<dbReference type="PANTHER" id="PTHR21058:SF0">
    <property type="entry name" value="6,7-DIMETHYL-8-RIBITYLLUMAZINE SYNTHASE"/>
    <property type="match status" value="1"/>
</dbReference>
<dbReference type="PANTHER" id="PTHR21058">
    <property type="entry name" value="6,7-DIMETHYL-8-RIBITYLLUMAZINE SYNTHASE DMRL SYNTHASE LUMAZINE SYNTHASE"/>
    <property type="match status" value="1"/>
</dbReference>
<dbReference type="Pfam" id="PF00885">
    <property type="entry name" value="DMRL_synthase"/>
    <property type="match status" value="1"/>
</dbReference>
<dbReference type="SUPFAM" id="SSF52121">
    <property type="entry name" value="Lumazine synthase"/>
    <property type="match status" value="1"/>
</dbReference>
<sequence length="142" mass="15427">MSKILIVNSVYYTEIANLLLEGATDKFKGNNIGYEIIKAPGTFEIPAAILFAVKGKNTNYDGYLALGCVIRGETDHYKYVCKGVIEGLNAIVMHHAIPLGMGIITADSKDKALIRADKNKKNVGGHAASTVLHMIDLHNKLK</sequence>
<comment type="function">
    <text evidence="1">Catalyzes the formation of 6,7-dimethyl-8-ribityllumazine by condensation of 5-amino-6-(D-ribitylamino)uracil with 3,4-dihydroxy-2-butanone 4-phosphate. This is the penultimate step in the biosynthesis of riboflavin.</text>
</comment>
<comment type="catalytic activity">
    <reaction evidence="1">
        <text>(2S)-2-hydroxy-3-oxobutyl phosphate + 5-amino-6-(D-ribitylamino)uracil = 6,7-dimethyl-8-(1-D-ribityl)lumazine + phosphate + 2 H2O + H(+)</text>
        <dbReference type="Rhea" id="RHEA:26152"/>
        <dbReference type="ChEBI" id="CHEBI:15377"/>
        <dbReference type="ChEBI" id="CHEBI:15378"/>
        <dbReference type="ChEBI" id="CHEBI:15934"/>
        <dbReference type="ChEBI" id="CHEBI:43474"/>
        <dbReference type="ChEBI" id="CHEBI:58201"/>
        <dbReference type="ChEBI" id="CHEBI:58830"/>
        <dbReference type="EC" id="2.5.1.78"/>
    </reaction>
</comment>
<comment type="pathway">
    <text evidence="1">Cofactor biosynthesis; riboflavin biosynthesis; riboflavin from 2-hydroxy-3-oxobutyl phosphate and 5-amino-6-(D-ribitylamino)uracil: step 1/2.</text>
</comment>
<comment type="similarity">
    <text evidence="1">Belongs to the DMRL synthase family.</text>
</comment>
<gene>
    <name evidence="1" type="primary">ribH</name>
    <name type="ordered locus">WP0005</name>
</gene>
<feature type="chain" id="PRO_1000098249" description="6,7-dimethyl-8-ribityllumazine synthase">
    <location>
        <begin position="1"/>
        <end position="142"/>
    </location>
</feature>
<feature type="active site" description="Proton donor" evidence="1">
    <location>
        <position position="76"/>
    </location>
</feature>
<feature type="binding site" evidence="1">
    <location>
        <position position="11"/>
    </location>
    <ligand>
        <name>5-amino-6-(D-ribitylamino)uracil</name>
        <dbReference type="ChEBI" id="CHEBI:15934"/>
    </ligand>
</feature>
<feature type="binding site" evidence="1">
    <location>
        <begin position="42"/>
        <end position="44"/>
    </location>
    <ligand>
        <name>5-amino-6-(D-ribitylamino)uracil</name>
        <dbReference type="ChEBI" id="CHEBI:15934"/>
    </ligand>
</feature>
<feature type="binding site" evidence="1">
    <location>
        <begin position="68"/>
        <end position="70"/>
    </location>
    <ligand>
        <name>5-amino-6-(D-ribitylamino)uracil</name>
        <dbReference type="ChEBI" id="CHEBI:15934"/>
    </ligand>
</feature>
<feature type="binding site" evidence="1">
    <location>
        <begin position="73"/>
        <end position="74"/>
    </location>
    <ligand>
        <name>(2S)-2-hydroxy-3-oxobutyl phosphate</name>
        <dbReference type="ChEBI" id="CHEBI:58830"/>
    </ligand>
</feature>
<feature type="binding site" evidence="1">
    <location>
        <position position="101"/>
    </location>
    <ligand>
        <name>5-amino-6-(D-ribitylamino)uracil</name>
        <dbReference type="ChEBI" id="CHEBI:15934"/>
    </ligand>
</feature>
<feature type="binding site" evidence="1">
    <location>
        <position position="115"/>
    </location>
    <ligand>
        <name>(2S)-2-hydroxy-3-oxobutyl phosphate</name>
        <dbReference type="ChEBI" id="CHEBI:58830"/>
    </ligand>
</feature>
<name>RISB_WOLPP</name>
<protein>
    <recommendedName>
        <fullName evidence="1">6,7-dimethyl-8-ribityllumazine synthase</fullName>
        <shortName evidence="1">DMRL synthase</shortName>
        <shortName evidence="1">LS</shortName>
        <shortName evidence="1">Lumazine synthase</shortName>
        <ecNumber evidence="1">2.5.1.78</ecNumber>
    </recommendedName>
</protein>